<keyword id="KW-0030">Aminoacyl-tRNA synthetase</keyword>
<keyword id="KW-0067">ATP-binding</keyword>
<keyword id="KW-0963">Cytoplasm</keyword>
<keyword id="KW-0436">Ligase</keyword>
<keyword id="KW-0547">Nucleotide-binding</keyword>
<keyword id="KW-0648">Protein biosynthesis</keyword>
<keyword id="KW-1185">Reference proteome</keyword>
<dbReference type="EC" id="6.1.1.23" evidence="1"/>
<dbReference type="EMBL" id="CP000009">
    <property type="protein sequence ID" value="AAW61486.1"/>
    <property type="molecule type" value="Genomic_DNA"/>
</dbReference>
<dbReference type="RefSeq" id="WP_011253267.1">
    <property type="nucleotide sequence ID" value="NC_006677.1"/>
</dbReference>
<dbReference type="SMR" id="Q5FQ60"/>
<dbReference type="STRING" id="290633.GOX1747"/>
<dbReference type="KEGG" id="gox:GOX1747"/>
<dbReference type="eggNOG" id="COG0173">
    <property type="taxonomic scope" value="Bacteria"/>
</dbReference>
<dbReference type="HOGENOM" id="CLU_014330_3_2_5"/>
<dbReference type="Proteomes" id="UP000006375">
    <property type="component" value="Chromosome"/>
</dbReference>
<dbReference type="GO" id="GO:0005737">
    <property type="term" value="C:cytoplasm"/>
    <property type="evidence" value="ECO:0007669"/>
    <property type="project" value="UniProtKB-SubCell"/>
</dbReference>
<dbReference type="GO" id="GO:0004815">
    <property type="term" value="F:aspartate-tRNA ligase activity"/>
    <property type="evidence" value="ECO:0007669"/>
    <property type="project" value="UniProtKB-UniRule"/>
</dbReference>
<dbReference type="GO" id="GO:0050560">
    <property type="term" value="F:aspartate-tRNA(Asn) ligase activity"/>
    <property type="evidence" value="ECO:0007669"/>
    <property type="project" value="UniProtKB-EC"/>
</dbReference>
<dbReference type="GO" id="GO:0005524">
    <property type="term" value="F:ATP binding"/>
    <property type="evidence" value="ECO:0007669"/>
    <property type="project" value="UniProtKB-UniRule"/>
</dbReference>
<dbReference type="GO" id="GO:0003676">
    <property type="term" value="F:nucleic acid binding"/>
    <property type="evidence" value="ECO:0007669"/>
    <property type="project" value="InterPro"/>
</dbReference>
<dbReference type="GO" id="GO:0006422">
    <property type="term" value="P:aspartyl-tRNA aminoacylation"/>
    <property type="evidence" value="ECO:0007669"/>
    <property type="project" value="UniProtKB-UniRule"/>
</dbReference>
<dbReference type="CDD" id="cd00777">
    <property type="entry name" value="AspRS_core"/>
    <property type="match status" value="1"/>
</dbReference>
<dbReference type="CDD" id="cd04317">
    <property type="entry name" value="EcAspRS_like_N"/>
    <property type="match status" value="1"/>
</dbReference>
<dbReference type="Gene3D" id="3.30.930.10">
    <property type="entry name" value="Bira Bifunctional Protein, Domain 2"/>
    <property type="match status" value="1"/>
</dbReference>
<dbReference type="Gene3D" id="3.30.1360.30">
    <property type="entry name" value="GAD-like domain"/>
    <property type="match status" value="1"/>
</dbReference>
<dbReference type="Gene3D" id="2.40.50.140">
    <property type="entry name" value="Nucleic acid-binding proteins"/>
    <property type="match status" value="1"/>
</dbReference>
<dbReference type="HAMAP" id="MF_00044">
    <property type="entry name" value="Asp_tRNA_synth_type1"/>
    <property type="match status" value="1"/>
</dbReference>
<dbReference type="InterPro" id="IPR004364">
    <property type="entry name" value="Aa-tRNA-synt_II"/>
</dbReference>
<dbReference type="InterPro" id="IPR006195">
    <property type="entry name" value="aa-tRNA-synth_II"/>
</dbReference>
<dbReference type="InterPro" id="IPR045864">
    <property type="entry name" value="aa-tRNA-synth_II/BPL/LPL"/>
</dbReference>
<dbReference type="InterPro" id="IPR004524">
    <property type="entry name" value="Asp-tRNA-ligase_1"/>
</dbReference>
<dbReference type="InterPro" id="IPR047089">
    <property type="entry name" value="Asp-tRNA-ligase_1_N"/>
</dbReference>
<dbReference type="InterPro" id="IPR002312">
    <property type="entry name" value="Asp/Asn-tRNA-synth_IIb"/>
</dbReference>
<dbReference type="InterPro" id="IPR047090">
    <property type="entry name" value="AspRS_core"/>
</dbReference>
<dbReference type="InterPro" id="IPR004115">
    <property type="entry name" value="GAD-like_sf"/>
</dbReference>
<dbReference type="InterPro" id="IPR029351">
    <property type="entry name" value="GAD_dom"/>
</dbReference>
<dbReference type="InterPro" id="IPR012340">
    <property type="entry name" value="NA-bd_OB-fold"/>
</dbReference>
<dbReference type="InterPro" id="IPR004365">
    <property type="entry name" value="NA-bd_OB_tRNA"/>
</dbReference>
<dbReference type="NCBIfam" id="TIGR00459">
    <property type="entry name" value="aspS_bact"/>
    <property type="match status" value="1"/>
</dbReference>
<dbReference type="NCBIfam" id="NF001750">
    <property type="entry name" value="PRK00476.1"/>
    <property type="match status" value="1"/>
</dbReference>
<dbReference type="PANTHER" id="PTHR22594:SF5">
    <property type="entry name" value="ASPARTATE--TRNA LIGASE, MITOCHONDRIAL"/>
    <property type="match status" value="1"/>
</dbReference>
<dbReference type="PANTHER" id="PTHR22594">
    <property type="entry name" value="ASPARTYL/LYSYL-TRNA SYNTHETASE"/>
    <property type="match status" value="1"/>
</dbReference>
<dbReference type="Pfam" id="PF02938">
    <property type="entry name" value="GAD"/>
    <property type="match status" value="1"/>
</dbReference>
<dbReference type="Pfam" id="PF00152">
    <property type="entry name" value="tRNA-synt_2"/>
    <property type="match status" value="1"/>
</dbReference>
<dbReference type="Pfam" id="PF01336">
    <property type="entry name" value="tRNA_anti-codon"/>
    <property type="match status" value="1"/>
</dbReference>
<dbReference type="PRINTS" id="PR01042">
    <property type="entry name" value="TRNASYNTHASP"/>
</dbReference>
<dbReference type="SUPFAM" id="SSF55681">
    <property type="entry name" value="Class II aaRS and biotin synthetases"/>
    <property type="match status" value="1"/>
</dbReference>
<dbReference type="SUPFAM" id="SSF55261">
    <property type="entry name" value="GAD domain-like"/>
    <property type="match status" value="1"/>
</dbReference>
<dbReference type="SUPFAM" id="SSF50249">
    <property type="entry name" value="Nucleic acid-binding proteins"/>
    <property type="match status" value="1"/>
</dbReference>
<dbReference type="PROSITE" id="PS50862">
    <property type="entry name" value="AA_TRNA_LIGASE_II"/>
    <property type="match status" value="1"/>
</dbReference>
<organism>
    <name type="scientific">Gluconobacter oxydans (strain 621H)</name>
    <name type="common">Gluconobacter suboxydans</name>
    <dbReference type="NCBI Taxonomy" id="290633"/>
    <lineage>
        <taxon>Bacteria</taxon>
        <taxon>Pseudomonadati</taxon>
        <taxon>Pseudomonadota</taxon>
        <taxon>Alphaproteobacteria</taxon>
        <taxon>Acetobacterales</taxon>
        <taxon>Acetobacteraceae</taxon>
        <taxon>Gluconobacter</taxon>
    </lineage>
</organism>
<comment type="function">
    <text evidence="1">Aspartyl-tRNA synthetase with relaxed tRNA specificity since it is able to aspartylate not only its cognate tRNA(Asp) but also tRNA(Asn). Reaction proceeds in two steps: L-aspartate is first activated by ATP to form Asp-AMP and then transferred to the acceptor end of tRNA(Asp/Asn).</text>
</comment>
<comment type="catalytic activity">
    <reaction evidence="1">
        <text>tRNA(Asx) + L-aspartate + ATP = L-aspartyl-tRNA(Asx) + AMP + diphosphate</text>
        <dbReference type="Rhea" id="RHEA:18349"/>
        <dbReference type="Rhea" id="RHEA-COMP:9710"/>
        <dbReference type="Rhea" id="RHEA-COMP:9711"/>
        <dbReference type="ChEBI" id="CHEBI:29991"/>
        <dbReference type="ChEBI" id="CHEBI:30616"/>
        <dbReference type="ChEBI" id="CHEBI:33019"/>
        <dbReference type="ChEBI" id="CHEBI:78442"/>
        <dbReference type="ChEBI" id="CHEBI:78516"/>
        <dbReference type="ChEBI" id="CHEBI:456215"/>
        <dbReference type="EC" id="6.1.1.23"/>
    </reaction>
</comment>
<comment type="subunit">
    <text evidence="1">Homodimer.</text>
</comment>
<comment type="subcellular location">
    <subcellularLocation>
        <location evidence="1">Cytoplasm</location>
    </subcellularLocation>
</comment>
<comment type="similarity">
    <text evidence="1">Belongs to the class-II aminoacyl-tRNA synthetase family. Type 1 subfamily.</text>
</comment>
<evidence type="ECO:0000255" key="1">
    <source>
        <dbReference type="HAMAP-Rule" id="MF_00044"/>
    </source>
</evidence>
<reference key="1">
    <citation type="journal article" date="2005" name="Nat. Biotechnol.">
        <title>Complete genome sequence of the acetic acid bacterium Gluconobacter oxydans.</title>
        <authorList>
            <person name="Prust C."/>
            <person name="Hoffmeister M."/>
            <person name="Liesegang H."/>
            <person name="Wiezer A."/>
            <person name="Fricke W.F."/>
            <person name="Ehrenreich A."/>
            <person name="Gottschalk G."/>
            <person name="Deppenmeier U."/>
        </authorList>
    </citation>
    <scope>NUCLEOTIDE SEQUENCE [LARGE SCALE GENOMIC DNA]</scope>
    <source>
        <strain>621H</strain>
    </source>
</reference>
<proteinExistence type="inferred from homology"/>
<feature type="chain" id="PRO_0000110878" description="Aspartate--tRNA(Asp/Asn) ligase">
    <location>
        <begin position="1"/>
        <end position="598"/>
    </location>
</feature>
<feature type="region of interest" description="Aspartate" evidence="1">
    <location>
        <begin position="199"/>
        <end position="202"/>
    </location>
</feature>
<feature type="binding site" evidence="1">
    <location>
        <position position="175"/>
    </location>
    <ligand>
        <name>L-aspartate</name>
        <dbReference type="ChEBI" id="CHEBI:29991"/>
    </ligand>
</feature>
<feature type="binding site" evidence="1">
    <location>
        <begin position="221"/>
        <end position="223"/>
    </location>
    <ligand>
        <name>ATP</name>
        <dbReference type="ChEBI" id="CHEBI:30616"/>
    </ligand>
</feature>
<feature type="binding site" evidence="1">
    <location>
        <position position="221"/>
    </location>
    <ligand>
        <name>L-aspartate</name>
        <dbReference type="ChEBI" id="CHEBI:29991"/>
    </ligand>
</feature>
<feature type="binding site" evidence="1">
    <location>
        <position position="452"/>
    </location>
    <ligand>
        <name>L-aspartate</name>
        <dbReference type="ChEBI" id="CHEBI:29991"/>
    </ligand>
</feature>
<feature type="binding site" evidence="1">
    <location>
        <position position="486"/>
    </location>
    <ligand>
        <name>ATP</name>
        <dbReference type="ChEBI" id="CHEBI:30616"/>
    </ligand>
</feature>
<feature type="binding site" evidence="1">
    <location>
        <position position="493"/>
    </location>
    <ligand>
        <name>L-aspartate</name>
        <dbReference type="ChEBI" id="CHEBI:29991"/>
    </ligand>
</feature>
<feature type="binding site" evidence="1">
    <location>
        <begin position="538"/>
        <end position="541"/>
    </location>
    <ligand>
        <name>ATP</name>
        <dbReference type="ChEBI" id="CHEBI:30616"/>
    </ligand>
</feature>
<feature type="site" description="Important for tRNA non-discrimination" evidence="1">
    <location>
        <position position="33"/>
    </location>
</feature>
<protein>
    <recommendedName>
        <fullName evidence="1">Aspartate--tRNA(Asp/Asn) ligase</fullName>
        <ecNumber evidence="1">6.1.1.23</ecNumber>
    </recommendedName>
    <alternativeName>
        <fullName evidence="1">Aspartyl-tRNA synthetase</fullName>
        <shortName evidence="1">AspRS</shortName>
    </alternativeName>
    <alternativeName>
        <fullName evidence="1">Non-discriminating aspartyl-tRNA synthetase</fullName>
        <shortName evidence="1">ND-AspRS</shortName>
    </alternativeName>
</protein>
<name>SYDND_GLUOX</name>
<gene>
    <name evidence="1" type="primary">aspS</name>
    <name type="ordered locus">GOX1747</name>
</gene>
<accession>Q5FQ60</accession>
<sequence length="598" mass="66287">MHPYRTHDCSALREENAGQVVRLSGWVHSKRDHGGLLFIDLRDHYGVTQIVIPAGTDLLEKAERLRVESVITVTGKVVVRHGSQRNPNLPTGDVEVLADALEVRSSAEVLPFQVAGNENYPEDLRLKYRYIDLRRDKMHQNIMLRSKVITSLRQRMIEQGFTEFQTPILTASSPEGARDFLVPARLHPGKFYALPQAPQQFKQLAMVAGFDRYFQIAPCFRDEASRADRSPGEFYQLDFEMSFVTQEDVFTVLEPVLAGVFNEFTPEGWKITDGAFPRIPYADAMRDYGSDKPDLRNPLIIKDVTDAFRDSGFGLFAKIAASGGQIRAIPAPGAGDRPRGFFDKLNSWARENGAGGLGYIIFGEEGGKGPIVKNLEADRVESIREICGLKAGDAVFFAAGKGDEVAKFSGVVRTKVATELDLIEKNAFRFCWVVDFPMYELNEETGKVDFSHNPFSMPQGGLEALNTQDPLTINAYQYDIVCNGVELSSGAIRNHLPDVMLRAFEIAGYGPEVVEERFGGMLNAFRYGAPPHGGAAPGVDRIVMLLADEPNIREVILFPLNQSGEDLMMEAPAPVEPARLKELHLALDLPKPKPTASK</sequence>